<keyword id="KW-0963">Cytoplasm</keyword>
<keyword id="KW-0227">DNA damage</keyword>
<keyword id="KW-0228">DNA excision</keyword>
<keyword id="KW-0234">DNA repair</keyword>
<keyword id="KW-0267">Excision nuclease</keyword>
<keyword id="KW-0742">SOS response</keyword>
<evidence type="ECO:0000255" key="1">
    <source>
        <dbReference type="HAMAP-Rule" id="MF_00203"/>
    </source>
</evidence>
<name>UVRC_ACIAD</name>
<feature type="chain" id="PRO_0000227390" description="UvrABC system protein C">
    <location>
        <begin position="1"/>
        <end position="599"/>
    </location>
</feature>
<feature type="domain" description="GIY-YIG" evidence="1">
    <location>
        <begin position="18"/>
        <end position="96"/>
    </location>
</feature>
<feature type="domain" description="UVR" evidence="1">
    <location>
        <begin position="207"/>
        <end position="242"/>
    </location>
</feature>
<gene>
    <name evidence="1" type="primary">uvrC</name>
    <name type="ordered locus">ACIAD0340</name>
</gene>
<proteinExistence type="inferred from homology"/>
<protein>
    <recommendedName>
        <fullName evidence="1">UvrABC system protein C</fullName>
        <shortName evidence="1">Protein UvrC</shortName>
    </recommendedName>
    <alternativeName>
        <fullName evidence="1">Excinuclease ABC subunit C</fullName>
    </alternativeName>
</protein>
<sequence length="599" mass="68206">MNPNARPHIEKILANMTQLPGVYRMLGKDGELLYVGKAKNLKNRVSSYFVKTIEHPKTQALVARIHDIETLVTRSETEALLLEQNLIKQHRPPYNIMLRDDKSYVYIFVSSDKPYPRIASGRGKGKHQIGKFFGPYPSAYSARDTLLVLQKLFNVRQCENSYFAQRKRPCLQYQIKRCSAPCVGLISPEDYKQDVDNSIRFLQGDTKELNQELIAKMEEAAEQLAFEKAMFYRDRLGLLREVQAQQAVFKIKGEADILAIAFQAGVTCVQIMYVRNGRMLGGKSYFPDMLSDDLGQMLSDFIANFYFQVADEVPSELIVNVELPDRKELEQALQTQFDKKIQIKHKVRETRAEWQELAIMNVQHAIKGQLSNHLELNERFHQLEQVVGRPVDRIECFDISHTMGEATIASCVVFDQGGARKRDYRQFGIEDITAGDDYAAMRQALTRRYKKHIVPDLLLIDGGKGQLHMAMEVMQTLGLDAFMVGVSKGEGRKPGLETLHFTDGSKIQLPEDHKALHLIQQVRDEAHRFAITKHRAKRDKRRAGSVLEVIPGLGPKRRRDLLTHFGGIQGVLKASEKELMLVSGLGPSMARTIYKILHE</sequence>
<comment type="function">
    <text evidence="1">The UvrABC repair system catalyzes the recognition and processing of DNA lesions. UvrC both incises the 5' and 3' sides of the lesion. The N-terminal half is responsible for the 3' incision and the C-terminal half is responsible for the 5' incision.</text>
</comment>
<comment type="subunit">
    <text evidence="1">Interacts with UvrB in an incision complex.</text>
</comment>
<comment type="subcellular location">
    <subcellularLocation>
        <location evidence="1">Cytoplasm</location>
    </subcellularLocation>
</comment>
<comment type="similarity">
    <text evidence="1">Belongs to the UvrC family.</text>
</comment>
<accession>Q6FF64</accession>
<organism>
    <name type="scientific">Acinetobacter baylyi (strain ATCC 33305 / BD413 / ADP1)</name>
    <dbReference type="NCBI Taxonomy" id="62977"/>
    <lineage>
        <taxon>Bacteria</taxon>
        <taxon>Pseudomonadati</taxon>
        <taxon>Pseudomonadota</taxon>
        <taxon>Gammaproteobacteria</taxon>
        <taxon>Moraxellales</taxon>
        <taxon>Moraxellaceae</taxon>
        <taxon>Acinetobacter</taxon>
    </lineage>
</organism>
<dbReference type="EMBL" id="CR543861">
    <property type="protein sequence ID" value="CAG67293.1"/>
    <property type="molecule type" value="Genomic_DNA"/>
</dbReference>
<dbReference type="RefSeq" id="WP_004920527.1">
    <property type="nucleotide sequence ID" value="NC_005966.1"/>
</dbReference>
<dbReference type="SMR" id="Q6FF64"/>
<dbReference type="STRING" id="202950.GCA_001485005_00605"/>
<dbReference type="GeneID" id="45232846"/>
<dbReference type="KEGG" id="aci:ACIAD0340"/>
<dbReference type="eggNOG" id="COG0322">
    <property type="taxonomic scope" value="Bacteria"/>
</dbReference>
<dbReference type="HOGENOM" id="CLU_014841_3_0_6"/>
<dbReference type="OrthoDB" id="9804933at2"/>
<dbReference type="BioCyc" id="ASP62977:ACIAD_RS01590-MONOMER"/>
<dbReference type="Proteomes" id="UP000000430">
    <property type="component" value="Chromosome"/>
</dbReference>
<dbReference type="GO" id="GO:0005737">
    <property type="term" value="C:cytoplasm"/>
    <property type="evidence" value="ECO:0007669"/>
    <property type="project" value="UniProtKB-SubCell"/>
</dbReference>
<dbReference type="GO" id="GO:0009380">
    <property type="term" value="C:excinuclease repair complex"/>
    <property type="evidence" value="ECO:0007669"/>
    <property type="project" value="InterPro"/>
</dbReference>
<dbReference type="GO" id="GO:0003677">
    <property type="term" value="F:DNA binding"/>
    <property type="evidence" value="ECO:0007669"/>
    <property type="project" value="UniProtKB-UniRule"/>
</dbReference>
<dbReference type="GO" id="GO:0009381">
    <property type="term" value="F:excinuclease ABC activity"/>
    <property type="evidence" value="ECO:0007669"/>
    <property type="project" value="UniProtKB-UniRule"/>
</dbReference>
<dbReference type="GO" id="GO:0006289">
    <property type="term" value="P:nucleotide-excision repair"/>
    <property type="evidence" value="ECO:0007669"/>
    <property type="project" value="UniProtKB-UniRule"/>
</dbReference>
<dbReference type="GO" id="GO:0009432">
    <property type="term" value="P:SOS response"/>
    <property type="evidence" value="ECO:0007669"/>
    <property type="project" value="UniProtKB-UniRule"/>
</dbReference>
<dbReference type="CDD" id="cd10434">
    <property type="entry name" value="GIY-YIG_UvrC_Cho"/>
    <property type="match status" value="1"/>
</dbReference>
<dbReference type="FunFam" id="3.30.420.340:FF:000001">
    <property type="entry name" value="UvrABC system protein C"/>
    <property type="match status" value="1"/>
</dbReference>
<dbReference type="FunFam" id="3.40.1440.10:FF:000001">
    <property type="entry name" value="UvrABC system protein C"/>
    <property type="match status" value="1"/>
</dbReference>
<dbReference type="Gene3D" id="1.10.150.20">
    <property type="entry name" value="5' to 3' exonuclease, C-terminal subdomain"/>
    <property type="match status" value="1"/>
</dbReference>
<dbReference type="Gene3D" id="3.40.1440.10">
    <property type="entry name" value="GIY-YIG endonuclease"/>
    <property type="match status" value="1"/>
</dbReference>
<dbReference type="Gene3D" id="4.10.860.10">
    <property type="entry name" value="UVR domain"/>
    <property type="match status" value="1"/>
</dbReference>
<dbReference type="Gene3D" id="3.30.420.340">
    <property type="entry name" value="UvrC, RNAse H endonuclease domain"/>
    <property type="match status" value="1"/>
</dbReference>
<dbReference type="HAMAP" id="MF_00203">
    <property type="entry name" value="UvrC"/>
    <property type="match status" value="1"/>
</dbReference>
<dbReference type="InterPro" id="IPR000305">
    <property type="entry name" value="GIY-YIG_endonuc"/>
</dbReference>
<dbReference type="InterPro" id="IPR035901">
    <property type="entry name" value="GIY-YIG_endonuc_sf"/>
</dbReference>
<dbReference type="InterPro" id="IPR047296">
    <property type="entry name" value="GIY-YIG_UvrC_Cho"/>
</dbReference>
<dbReference type="InterPro" id="IPR010994">
    <property type="entry name" value="RuvA_2-like"/>
</dbReference>
<dbReference type="InterPro" id="IPR001943">
    <property type="entry name" value="UVR_dom"/>
</dbReference>
<dbReference type="InterPro" id="IPR036876">
    <property type="entry name" value="UVR_dom_sf"/>
</dbReference>
<dbReference type="InterPro" id="IPR050066">
    <property type="entry name" value="UvrABC_protein_C"/>
</dbReference>
<dbReference type="InterPro" id="IPR004791">
    <property type="entry name" value="UvrC"/>
</dbReference>
<dbReference type="InterPro" id="IPR001162">
    <property type="entry name" value="UvrC_RNase_H_dom"/>
</dbReference>
<dbReference type="InterPro" id="IPR038476">
    <property type="entry name" value="UvrC_RNase_H_dom_sf"/>
</dbReference>
<dbReference type="NCBIfam" id="TIGR00194">
    <property type="entry name" value="uvrC"/>
    <property type="match status" value="1"/>
</dbReference>
<dbReference type="PANTHER" id="PTHR30562:SF1">
    <property type="entry name" value="UVRABC SYSTEM PROTEIN C"/>
    <property type="match status" value="1"/>
</dbReference>
<dbReference type="PANTHER" id="PTHR30562">
    <property type="entry name" value="UVRC/OXIDOREDUCTASE"/>
    <property type="match status" value="1"/>
</dbReference>
<dbReference type="Pfam" id="PF01541">
    <property type="entry name" value="GIY-YIG"/>
    <property type="match status" value="1"/>
</dbReference>
<dbReference type="Pfam" id="PF14520">
    <property type="entry name" value="HHH_5"/>
    <property type="match status" value="1"/>
</dbReference>
<dbReference type="Pfam" id="PF02151">
    <property type="entry name" value="UVR"/>
    <property type="match status" value="1"/>
</dbReference>
<dbReference type="Pfam" id="PF22920">
    <property type="entry name" value="UvrC_RNaseH"/>
    <property type="match status" value="1"/>
</dbReference>
<dbReference type="Pfam" id="PF08459">
    <property type="entry name" value="UvrC_RNaseH_dom"/>
    <property type="match status" value="1"/>
</dbReference>
<dbReference type="SMART" id="SM00465">
    <property type="entry name" value="GIYc"/>
    <property type="match status" value="1"/>
</dbReference>
<dbReference type="SUPFAM" id="SSF46600">
    <property type="entry name" value="C-terminal UvrC-binding domain of UvrB"/>
    <property type="match status" value="1"/>
</dbReference>
<dbReference type="SUPFAM" id="SSF82771">
    <property type="entry name" value="GIY-YIG endonuclease"/>
    <property type="match status" value="1"/>
</dbReference>
<dbReference type="SUPFAM" id="SSF47781">
    <property type="entry name" value="RuvA domain 2-like"/>
    <property type="match status" value="1"/>
</dbReference>
<dbReference type="PROSITE" id="PS50164">
    <property type="entry name" value="GIY_YIG"/>
    <property type="match status" value="1"/>
</dbReference>
<dbReference type="PROSITE" id="PS50151">
    <property type="entry name" value="UVR"/>
    <property type="match status" value="1"/>
</dbReference>
<dbReference type="PROSITE" id="PS50165">
    <property type="entry name" value="UVRC"/>
    <property type="match status" value="1"/>
</dbReference>
<reference key="1">
    <citation type="journal article" date="2004" name="Nucleic Acids Res.">
        <title>Unique features revealed by the genome sequence of Acinetobacter sp. ADP1, a versatile and naturally transformation competent bacterium.</title>
        <authorList>
            <person name="Barbe V."/>
            <person name="Vallenet D."/>
            <person name="Fonknechten N."/>
            <person name="Kreimeyer A."/>
            <person name="Oztas S."/>
            <person name="Labarre L."/>
            <person name="Cruveiller S."/>
            <person name="Robert C."/>
            <person name="Duprat S."/>
            <person name="Wincker P."/>
            <person name="Ornston L.N."/>
            <person name="Weissenbach J."/>
            <person name="Marliere P."/>
            <person name="Cohen G.N."/>
            <person name="Medigue C."/>
        </authorList>
    </citation>
    <scope>NUCLEOTIDE SEQUENCE [LARGE SCALE GENOMIC DNA]</scope>
    <source>
        <strain>ATCC 33305 / BD413 / ADP1</strain>
    </source>
</reference>